<keyword id="KW-0240">DNA-directed RNA polymerase</keyword>
<keyword id="KW-0460">Magnesium</keyword>
<keyword id="KW-0479">Metal-binding</keyword>
<keyword id="KW-0548">Nucleotidyltransferase</keyword>
<keyword id="KW-0539">Nucleus</keyword>
<keyword id="KW-1185">Reference proteome</keyword>
<keyword id="KW-0804">Transcription</keyword>
<keyword id="KW-0808">Transferase</keyword>
<keyword id="KW-0862">Zinc</keyword>
<keyword id="KW-0863">Zinc-finger</keyword>
<comment type="function">
    <text evidence="1">DNA-dependent RNA polymerase catalyzes the transcription of DNA into RNA using the four ribonucleoside triphosphates as substrates. Second largest component of RNA polymerase II which synthesizes mRNA precursors and many functional non-coding RNAs. Proposed to contribute to the polymerase catalytic activity and forms the polymerase active center together with the largest subunit. Pol II is the central component of the basal RNA polymerase II transcription machinery. It is composed of mobile elements that move relative to each other. RPB2 is part of the core element with the central large cleft, the clamp element that moves to open and close the cleft and the jaws that are thought to grab the incoming DNA template (By similarity).</text>
</comment>
<comment type="catalytic activity">
    <reaction>
        <text>RNA(n) + a ribonucleoside 5'-triphosphate = RNA(n+1) + diphosphate</text>
        <dbReference type="Rhea" id="RHEA:21248"/>
        <dbReference type="Rhea" id="RHEA-COMP:14527"/>
        <dbReference type="Rhea" id="RHEA-COMP:17342"/>
        <dbReference type="ChEBI" id="CHEBI:33019"/>
        <dbReference type="ChEBI" id="CHEBI:61557"/>
        <dbReference type="ChEBI" id="CHEBI:140395"/>
        <dbReference type="EC" id="2.7.7.6"/>
    </reaction>
</comment>
<comment type="subunit">
    <text evidence="1">Component of the RNA polymerase II (Pol II) complex consisting of 12 subunits.</text>
</comment>
<comment type="subcellular location">
    <subcellularLocation>
        <location evidence="1">Nucleus</location>
    </subcellularLocation>
</comment>
<comment type="miscellaneous">
    <text evidence="1">The binding of ribonucleoside triphosphate to the RNA polymerase II transcribing complex probably involves a two-step mechanism. The initial binding seems to occur at the entry (E) site and involves a magnesium ion coordinated by three conserved aspartate residues of the two largest RNA Pol II subunits (By similarity).</text>
</comment>
<comment type="similarity">
    <text evidence="3">Belongs to the RNA polymerase beta chain family.</text>
</comment>
<sequence length="1223" mass="138714">MSADNEDYYDEDPYGFEEENAPITAEDTWAVISAFFREKGLVSQQLDSFNQFVDYTLQDIISEDSTLILEQLAQHTTEQDNISRKYEISFGKIYVTKPMVNESDGVTHALYPQEARLRNLTYSSGLFVDVTKRTYEAVDVPGRDLNYQLIAEESEEDSESGKVFIGRLPIMLRSKNCYLSDATESDLYKLKECPFDMGGYFIINGSEKVLIAQERSAGNIVQVFKKAAPSPISHVAEIRSALEKGSRFISTLQVKLYGRESSSARTIKATLPYIKQDIPIVIIFRALGIIPDGEILEHICYDVNDWQMLEMLKPCVEDGFVIQDRETALDFIGRRGTALGIKKEKRIQYAKDILQKEFLPHITQLEGFESRKAFFLGYMINRLLLCALDRKDQDDRDHFGKKRLDLAGPLLAQLFKTLFRKLTKDIFRYMQRTVEEANDFNMKLAINAKTITSGLKYALATGNWGEQKKAMSSRAGVSQVLNRYTYSSTLSHLRRTNTPIGRDGKLAKPRQLHNTHWGLVCPAETPEGQACGLVKNLSLMSCISVGADPMPIITFLSEWGMEPLEDYVPHQSPDATRVFVNGVWHGVHRNPARLMETLRTLRRKGDINPEVSMIRDIREQELKIFTDAGRVYRPLFIVEDDEELGRKELKVRKGHVAKLMATEYQDIEGGFEDAEDYTWSSLLNEGLVEYIDAEEEESILIAMQPEDLEPTAVEQDIPKENVDLAKRIKVTHHATTFTHCEIHPSMILGVAASIIPFPDHNQSPRNTYQSAMGKQAMGVFLTNYNFRMDTMANILYYPQKPLGTTRAMEYLKFRELPAGQNAIVAIACYSGYNQEDSMIMNQSSIDRGLFRSLFFRSYMDQEKKYGMSITETFEKPQRTNTLRMKHGTYDKLDEDGLIAPGVRVSGEDIIIGKTTPIAPDEEELGQRTAYHSKRDASTPLRSTENGIVDQVLITTNQDGLKFVKVRVRTTKVPQIGDKFASRHGQKGTIGITYRREDMPFTAEGIVPDLIINPHAIPSRMTVAHLIECLLSKVAALSGNEGDASPFTDITVEGISKLLREHGYQSRGFEVMYNGHTGKKLMAQIFFGPTYYQRLRHMVDDKIHARARGPMQVLTRQPVEGRSRDGGLRFGEMERDCMIAHGAAAFLKERLMEASDAFRVHICGICGLMSVIAKLNHNQFECKGCDNKIDIYQIHIPYAAKLLFQELMAMNITPRLYTDRSRDF</sequence>
<proteinExistence type="inferred from homology"/>
<dbReference type="EC" id="2.7.7.6"/>
<dbReference type="EMBL" id="CR380958">
    <property type="protein sequence ID" value="CAG61929.1"/>
    <property type="molecule type" value="Genomic_DNA"/>
</dbReference>
<dbReference type="EMBL" id="AY485612">
    <property type="protein sequence ID" value="AAS67501.1"/>
    <property type="molecule type" value="Genomic_DNA"/>
</dbReference>
<dbReference type="EMBL" id="AY497601">
    <property type="protein sequence ID" value="AAT12525.1"/>
    <property type="molecule type" value="Genomic_DNA"/>
</dbReference>
<dbReference type="RefSeq" id="XP_448959.1">
    <property type="nucleotide sequence ID" value="XM_448959.1"/>
</dbReference>
<dbReference type="SMR" id="Q6FLD5"/>
<dbReference type="FunCoup" id="Q6FLD5">
    <property type="interactions" value="1400"/>
</dbReference>
<dbReference type="STRING" id="284593.Q6FLD5"/>
<dbReference type="EnsemblFungi" id="CAGL0L04246g-T">
    <property type="protein sequence ID" value="CAGL0L04246g-T-p1"/>
    <property type="gene ID" value="CAGL0L04246g"/>
</dbReference>
<dbReference type="GeneID" id="2890773"/>
<dbReference type="KEGG" id="cgr:2890773"/>
<dbReference type="CGD" id="CAL0135754">
    <property type="gene designation" value="RPB2"/>
</dbReference>
<dbReference type="VEuPathDB" id="FungiDB:B1J91_L04246g"/>
<dbReference type="VEuPathDB" id="FungiDB:CAGL0L04246g"/>
<dbReference type="eggNOG" id="KOG0214">
    <property type="taxonomic scope" value="Eukaryota"/>
</dbReference>
<dbReference type="HOGENOM" id="CLU_000524_5_2_1"/>
<dbReference type="InParanoid" id="Q6FLD5"/>
<dbReference type="OMA" id="CYDRNDS"/>
<dbReference type="Proteomes" id="UP000002428">
    <property type="component" value="Chromosome L"/>
</dbReference>
<dbReference type="GO" id="GO:0005739">
    <property type="term" value="C:mitochondrion"/>
    <property type="evidence" value="ECO:0007669"/>
    <property type="project" value="GOC"/>
</dbReference>
<dbReference type="GO" id="GO:0005721">
    <property type="term" value="C:pericentric heterochromatin"/>
    <property type="evidence" value="ECO:0007669"/>
    <property type="project" value="EnsemblFungi"/>
</dbReference>
<dbReference type="GO" id="GO:0005665">
    <property type="term" value="C:RNA polymerase II, core complex"/>
    <property type="evidence" value="ECO:0007669"/>
    <property type="project" value="EnsemblFungi"/>
</dbReference>
<dbReference type="GO" id="GO:0003677">
    <property type="term" value="F:DNA binding"/>
    <property type="evidence" value="ECO:0007669"/>
    <property type="project" value="EnsemblFungi"/>
</dbReference>
<dbReference type="GO" id="GO:0003899">
    <property type="term" value="F:DNA-directed RNA polymerase activity"/>
    <property type="evidence" value="ECO:0007669"/>
    <property type="project" value="UniProtKB-EC"/>
</dbReference>
<dbReference type="GO" id="GO:0032549">
    <property type="term" value="F:ribonucleoside binding"/>
    <property type="evidence" value="ECO:0007669"/>
    <property type="project" value="InterPro"/>
</dbReference>
<dbReference type="GO" id="GO:0003723">
    <property type="term" value="F:RNA binding"/>
    <property type="evidence" value="ECO:0007669"/>
    <property type="project" value="EnsemblFungi"/>
</dbReference>
<dbReference type="GO" id="GO:0003968">
    <property type="term" value="F:RNA-directed RNA polymerase activity"/>
    <property type="evidence" value="ECO:0007669"/>
    <property type="project" value="EnsemblFungi"/>
</dbReference>
<dbReference type="GO" id="GO:0008270">
    <property type="term" value="F:zinc ion binding"/>
    <property type="evidence" value="ECO:0007669"/>
    <property type="project" value="UniProtKB-KW"/>
</dbReference>
<dbReference type="GO" id="GO:0140727">
    <property type="term" value="P:siRNA-mediated pericentric heterochromatin formation"/>
    <property type="evidence" value="ECO:0007669"/>
    <property type="project" value="EnsemblFungi"/>
</dbReference>
<dbReference type="GO" id="GO:0006368">
    <property type="term" value="P:transcription elongation by RNA polymerase II"/>
    <property type="evidence" value="ECO:0007669"/>
    <property type="project" value="EnsemblFungi"/>
</dbReference>
<dbReference type="GO" id="GO:0006367">
    <property type="term" value="P:transcription initiation at RNA polymerase II promoter"/>
    <property type="evidence" value="ECO:0007669"/>
    <property type="project" value="EnsemblFungi"/>
</dbReference>
<dbReference type="CDD" id="cd00653">
    <property type="entry name" value="RNA_pol_B_RPB2"/>
    <property type="match status" value="1"/>
</dbReference>
<dbReference type="FunFam" id="2.40.270.10:FF:000006">
    <property type="entry name" value="DNA-directed RNA polymerase subunit beta"/>
    <property type="match status" value="1"/>
</dbReference>
<dbReference type="FunFam" id="2.40.50.150:FF:000002">
    <property type="entry name" value="DNA-directed RNA polymerase subunit beta"/>
    <property type="match status" value="1"/>
</dbReference>
<dbReference type="FunFam" id="3.90.1070.20:FF:000001">
    <property type="entry name" value="DNA-directed RNA polymerase subunit beta"/>
    <property type="match status" value="1"/>
</dbReference>
<dbReference type="FunFam" id="3.90.1100.10:FF:000005">
    <property type="entry name" value="DNA-directed RNA polymerase subunit beta"/>
    <property type="match status" value="1"/>
</dbReference>
<dbReference type="FunFam" id="3.90.1100.10:FF:000011">
    <property type="entry name" value="DNA-directed RNA polymerase subunit beta"/>
    <property type="match status" value="1"/>
</dbReference>
<dbReference type="FunFam" id="3.90.1110.10:FF:000003">
    <property type="entry name" value="DNA-directed RNA polymerase subunit beta"/>
    <property type="match status" value="1"/>
</dbReference>
<dbReference type="FunFam" id="3.90.1800.10:FF:000002">
    <property type="entry name" value="DNA-directed RNA polymerase subunit beta"/>
    <property type="match status" value="1"/>
</dbReference>
<dbReference type="Gene3D" id="2.40.50.150">
    <property type="match status" value="1"/>
</dbReference>
<dbReference type="Gene3D" id="3.90.1070.20">
    <property type="match status" value="1"/>
</dbReference>
<dbReference type="Gene3D" id="3.90.1100.10">
    <property type="match status" value="1"/>
</dbReference>
<dbReference type="Gene3D" id="2.40.270.10">
    <property type="entry name" value="DNA-directed RNA polymerase, subunit 2, domain 6"/>
    <property type="match status" value="1"/>
</dbReference>
<dbReference type="Gene3D" id="3.90.1800.10">
    <property type="entry name" value="RNA polymerase alpha subunit dimerisation domain"/>
    <property type="match status" value="1"/>
</dbReference>
<dbReference type="Gene3D" id="3.90.1110.10">
    <property type="entry name" value="RNA polymerase Rpb2, domain 2"/>
    <property type="match status" value="1"/>
</dbReference>
<dbReference type="InterPro" id="IPR015712">
    <property type="entry name" value="DNA-dir_RNA_pol_su2"/>
</dbReference>
<dbReference type="InterPro" id="IPR007120">
    <property type="entry name" value="DNA-dir_RNAP_su2_dom"/>
</dbReference>
<dbReference type="InterPro" id="IPR037033">
    <property type="entry name" value="DNA-dir_RNAP_su2_hyb_sf"/>
</dbReference>
<dbReference type="InterPro" id="IPR007121">
    <property type="entry name" value="RNA_pol_bsu_CS"/>
</dbReference>
<dbReference type="InterPro" id="IPR007644">
    <property type="entry name" value="RNA_pol_bsu_protrusion"/>
</dbReference>
<dbReference type="InterPro" id="IPR007642">
    <property type="entry name" value="RNA_pol_Rpb2_2"/>
</dbReference>
<dbReference type="InterPro" id="IPR037034">
    <property type="entry name" value="RNA_pol_Rpb2_2_sf"/>
</dbReference>
<dbReference type="InterPro" id="IPR007645">
    <property type="entry name" value="RNA_pol_Rpb2_3"/>
</dbReference>
<dbReference type="InterPro" id="IPR007646">
    <property type="entry name" value="RNA_pol_Rpb2_4"/>
</dbReference>
<dbReference type="InterPro" id="IPR007647">
    <property type="entry name" value="RNA_pol_Rpb2_5"/>
</dbReference>
<dbReference type="InterPro" id="IPR007641">
    <property type="entry name" value="RNA_pol_Rpb2_7"/>
</dbReference>
<dbReference type="InterPro" id="IPR014724">
    <property type="entry name" value="RNA_pol_RPB2_OB-fold"/>
</dbReference>
<dbReference type="NCBIfam" id="NF007175">
    <property type="entry name" value="PRK09606.1"/>
    <property type="match status" value="1"/>
</dbReference>
<dbReference type="PANTHER" id="PTHR20856">
    <property type="entry name" value="DNA-DIRECTED RNA POLYMERASE I SUBUNIT 2"/>
    <property type="match status" value="1"/>
</dbReference>
<dbReference type="Pfam" id="PF04563">
    <property type="entry name" value="RNA_pol_Rpb2_1"/>
    <property type="match status" value="1"/>
</dbReference>
<dbReference type="Pfam" id="PF04561">
    <property type="entry name" value="RNA_pol_Rpb2_2"/>
    <property type="match status" value="1"/>
</dbReference>
<dbReference type="Pfam" id="PF04565">
    <property type="entry name" value="RNA_pol_Rpb2_3"/>
    <property type="match status" value="1"/>
</dbReference>
<dbReference type="Pfam" id="PF04566">
    <property type="entry name" value="RNA_pol_Rpb2_4"/>
    <property type="match status" value="1"/>
</dbReference>
<dbReference type="Pfam" id="PF04567">
    <property type="entry name" value="RNA_pol_Rpb2_5"/>
    <property type="match status" value="1"/>
</dbReference>
<dbReference type="Pfam" id="PF00562">
    <property type="entry name" value="RNA_pol_Rpb2_6"/>
    <property type="match status" value="1"/>
</dbReference>
<dbReference type="Pfam" id="PF04560">
    <property type="entry name" value="RNA_pol_Rpb2_7"/>
    <property type="match status" value="1"/>
</dbReference>
<dbReference type="SUPFAM" id="SSF64484">
    <property type="entry name" value="beta and beta-prime subunits of DNA dependent RNA-polymerase"/>
    <property type="match status" value="1"/>
</dbReference>
<dbReference type="PROSITE" id="PS01166">
    <property type="entry name" value="RNA_POL_BETA"/>
    <property type="match status" value="1"/>
</dbReference>
<name>RPB2_CANGA</name>
<protein>
    <recommendedName>
        <fullName>DNA-directed RNA polymerase II subunit RPB2</fullName>
        <shortName>RNA polymerase II subunit 2</shortName>
        <shortName>RNA polymerase II subunit B2</shortName>
        <ecNumber>2.7.7.6</ecNumber>
    </recommendedName>
</protein>
<reference key="1">
    <citation type="journal article" date="2004" name="Nature">
        <title>Genome evolution in yeasts.</title>
        <authorList>
            <person name="Dujon B."/>
            <person name="Sherman D."/>
            <person name="Fischer G."/>
            <person name="Durrens P."/>
            <person name="Casaregola S."/>
            <person name="Lafontaine I."/>
            <person name="de Montigny J."/>
            <person name="Marck C."/>
            <person name="Neuveglise C."/>
            <person name="Talla E."/>
            <person name="Goffard N."/>
            <person name="Frangeul L."/>
            <person name="Aigle M."/>
            <person name="Anthouard V."/>
            <person name="Babour A."/>
            <person name="Barbe V."/>
            <person name="Barnay S."/>
            <person name="Blanchin S."/>
            <person name="Beckerich J.-M."/>
            <person name="Beyne E."/>
            <person name="Bleykasten C."/>
            <person name="Boisrame A."/>
            <person name="Boyer J."/>
            <person name="Cattolico L."/>
            <person name="Confanioleri F."/>
            <person name="de Daruvar A."/>
            <person name="Despons L."/>
            <person name="Fabre E."/>
            <person name="Fairhead C."/>
            <person name="Ferry-Dumazet H."/>
            <person name="Groppi A."/>
            <person name="Hantraye F."/>
            <person name="Hennequin C."/>
            <person name="Jauniaux N."/>
            <person name="Joyet P."/>
            <person name="Kachouri R."/>
            <person name="Kerrest A."/>
            <person name="Koszul R."/>
            <person name="Lemaire M."/>
            <person name="Lesur I."/>
            <person name="Ma L."/>
            <person name="Muller H."/>
            <person name="Nicaud J.-M."/>
            <person name="Nikolski M."/>
            <person name="Oztas S."/>
            <person name="Ozier-Kalogeropoulos O."/>
            <person name="Pellenz S."/>
            <person name="Potier S."/>
            <person name="Richard G.-F."/>
            <person name="Straub M.-L."/>
            <person name="Suleau A."/>
            <person name="Swennen D."/>
            <person name="Tekaia F."/>
            <person name="Wesolowski-Louvel M."/>
            <person name="Westhof E."/>
            <person name="Wirth B."/>
            <person name="Zeniou-Meyer M."/>
            <person name="Zivanovic Y."/>
            <person name="Bolotin-Fukuhara M."/>
            <person name="Thierry A."/>
            <person name="Bouchier C."/>
            <person name="Caudron B."/>
            <person name="Scarpelli C."/>
            <person name="Gaillardin C."/>
            <person name="Weissenbach J."/>
            <person name="Wincker P."/>
            <person name="Souciet J.-L."/>
        </authorList>
    </citation>
    <scope>NUCLEOTIDE SEQUENCE [LARGE SCALE GENOMIC DNA]</scope>
    <source>
        <strain>ATCC 2001 / BCRC 20586 / JCM 3761 / NBRC 0622 / NRRL Y-65 / CBS 138</strain>
    </source>
</reference>
<reference key="2">
    <citation type="journal article" date="2004" name="Proc. Natl. Acad. Sci. U.S.A.">
        <title>Body plan evolution of ascomycetes, as inferred from an RNA polymerase II phylogeny.</title>
        <authorList>
            <person name="Liu Y.J."/>
            <person name="Hall B.D."/>
        </authorList>
    </citation>
    <scope>NUCLEOTIDE SEQUENCE [GENOMIC DNA] OF 208-1092</scope>
</reference>
<reference key="3">
    <citation type="submission" date="2003-12" db="EMBL/GenBank/DDBJ databases">
        <title>Molecular phylogeny and evolution of Candida and related species within the order saccharomycetales as inferred from multilocus sequence analysis.</title>
        <authorList>
            <person name="Diezmann S."/>
            <person name="Cox C.J."/>
            <person name="Schoenian G."/>
            <person name="Vilgalys R.J."/>
            <person name="Mitchell T.G."/>
        </authorList>
    </citation>
    <scope>NUCLEOTIDE SEQUENCE [GENOMIC DNA] OF 402-756</scope>
    <source>
        <strain>ATCC 2001 / BCRC 20586 / JCM 3761 / NBRC 0622 / NRRL Y-65 / CBS 138</strain>
    </source>
</reference>
<feature type="chain" id="PRO_0000048089" description="DNA-directed RNA polymerase II subunit RPB2">
    <location>
        <begin position="1"/>
        <end position="1223"/>
    </location>
</feature>
<feature type="zinc finger region" description="C4-type">
    <location>
        <begin position="1162"/>
        <end position="1184"/>
    </location>
</feature>
<feature type="region of interest" description="Disordered" evidence="2">
    <location>
        <begin position="1"/>
        <end position="20"/>
    </location>
</feature>
<feature type="binding site" evidence="1">
    <location>
        <position position="836"/>
    </location>
    <ligand>
        <name>Mg(2+)</name>
        <dbReference type="ChEBI" id="CHEBI:18420"/>
        <note>ligand shared with RPB1</note>
    </ligand>
</feature>
<feature type="binding site" evidence="1">
    <location>
        <position position="1162"/>
    </location>
    <ligand>
        <name>Zn(2+)</name>
        <dbReference type="ChEBI" id="CHEBI:29105"/>
    </ligand>
</feature>
<feature type="binding site" evidence="1">
    <location>
        <position position="1165"/>
    </location>
    <ligand>
        <name>Zn(2+)</name>
        <dbReference type="ChEBI" id="CHEBI:29105"/>
    </ligand>
</feature>
<feature type="binding site" evidence="1">
    <location>
        <position position="1181"/>
    </location>
    <ligand>
        <name>Zn(2+)</name>
        <dbReference type="ChEBI" id="CHEBI:29105"/>
    </ligand>
</feature>
<feature type="binding site" evidence="1">
    <location>
        <position position="1184"/>
    </location>
    <ligand>
        <name>Zn(2+)</name>
        <dbReference type="ChEBI" id="CHEBI:29105"/>
    </ligand>
</feature>
<feature type="sequence conflict" description="In Ref. 2." evidence="3" ref="2">
    <original>K</original>
    <variation>C</variation>
    <location>
        <position position="208"/>
    </location>
</feature>
<feature type="sequence conflict" description="In Ref. 2." evidence="3" ref="2">
    <original>I</original>
    <variation>H</variation>
    <location>
        <position position="211"/>
    </location>
</feature>
<feature type="sequence conflict" description="In Ref. 3; AAT12525." evidence="3" ref="3">
    <original>H</original>
    <variation>L</variation>
    <location>
        <position position="739"/>
    </location>
</feature>
<feature type="sequence conflict" description="In Ref. 2." evidence="3" ref="2">
    <original>Q</original>
    <variation>G</variation>
    <location>
        <position position="1092"/>
    </location>
</feature>
<gene>
    <name type="primary">RPB2</name>
    <name type="ordered locus">CAGL0L04246g</name>
</gene>
<evidence type="ECO:0000250" key="1"/>
<evidence type="ECO:0000256" key="2">
    <source>
        <dbReference type="SAM" id="MobiDB-lite"/>
    </source>
</evidence>
<evidence type="ECO:0000305" key="3"/>
<organism>
    <name type="scientific">Candida glabrata (strain ATCC 2001 / BCRC 20586 / JCM 3761 / NBRC 0622 / NRRL Y-65 / CBS 138)</name>
    <name type="common">Yeast</name>
    <name type="synonym">Nakaseomyces glabratus</name>
    <dbReference type="NCBI Taxonomy" id="284593"/>
    <lineage>
        <taxon>Eukaryota</taxon>
        <taxon>Fungi</taxon>
        <taxon>Dikarya</taxon>
        <taxon>Ascomycota</taxon>
        <taxon>Saccharomycotina</taxon>
        <taxon>Saccharomycetes</taxon>
        <taxon>Saccharomycetales</taxon>
        <taxon>Saccharomycetaceae</taxon>
        <taxon>Nakaseomyces</taxon>
    </lineage>
</organism>
<accession>Q6FLD5</accession>
<accession>Q6JEI1</accession>
<accession>Q6RYI6</accession>